<accession>Q3AE01</accession>
<proteinExistence type="inferred from homology"/>
<feature type="chain" id="PRO_1000062087" description="Adenosylcobinamide-GDP ribazoletransferase">
    <location>
        <begin position="1"/>
        <end position="255"/>
    </location>
</feature>
<feature type="transmembrane region" description="Helical" evidence="1">
    <location>
        <begin position="33"/>
        <end position="53"/>
    </location>
</feature>
<feature type="transmembrane region" description="Helical" evidence="1">
    <location>
        <begin position="57"/>
        <end position="77"/>
    </location>
</feature>
<feature type="transmembrane region" description="Helical" evidence="1">
    <location>
        <begin position="107"/>
        <end position="127"/>
    </location>
</feature>
<feature type="transmembrane region" description="Helical" evidence="1">
    <location>
        <begin position="136"/>
        <end position="156"/>
    </location>
</feature>
<feature type="transmembrane region" description="Helical" evidence="1">
    <location>
        <begin position="174"/>
        <end position="194"/>
    </location>
</feature>
<feature type="transmembrane region" description="Helical" evidence="1">
    <location>
        <begin position="196"/>
        <end position="216"/>
    </location>
</feature>
<feature type="transmembrane region" description="Helical" evidence="1">
    <location>
        <begin position="234"/>
        <end position="254"/>
    </location>
</feature>
<evidence type="ECO:0000255" key="1">
    <source>
        <dbReference type="HAMAP-Rule" id="MF_00719"/>
    </source>
</evidence>
<reference key="1">
    <citation type="journal article" date="2005" name="PLoS Genet.">
        <title>Life in hot carbon monoxide: the complete genome sequence of Carboxydothermus hydrogenoformans Z-2901.</title>
        <authorList>
            <person name="Wu M."/>
            <person name="Ren Q."/>
            <person name="Durkin A.S."/>
            <person name="Daugherty S.C."/>
            <person name="Brinkac L.M."/>
            <person name="Dodson R.J."/>
            <person name="Madupu R."/>
            <person name="Sullivan S.A."/>
            <person name="Kolonay J.F."/>
            <person name="Nelson W.C."/>
            <person name="Tallon L.J."/>
            <person name="Jones K.M."/>
            <person name="Ulrich L.E."/>
            <person name="Gonzalez J.M."/>
            <person name="Zhulin I.B."/>
            <person name="Robb F.T."/>
            <person name="Eisen J.A."/>
        </authorList>
    </citation>
    <scope>NUCLEOTIDE SEQUENCE [LARGE SCALE GENOMIC DNA]</scope>
    <source>
        <strain>ATCC BAA-161 / DSM 6008 / Z-2901</strain>
    </source>
</reference>
<comment type="function">
    <text evidence="1">Joins adenosylcobinamide-GDP and alpha-ribazole to generate adenosylcobalamin (Ado-cobalamin). Also synthesizes adenosylcobalamin 5'-phosphate from adenosylcobinamide-GDP and alpha-ribazole 5'-phosphate.</text>
</comment>
<comment type="catalytic activity">
    <reaction evidence="1">
        <text>alpha-ribazole + adenosylcob(III)inamide-GDP = adenosylcob(III)alamin + GMP + H(+)</text>
        <dbReference type="Rhea" id="RHEA:16049"/>
        <dbReference type="ChEBI" id="CHEBI:10329"/>
        <dbReference type="ChEBI" id="CHEBI:15378"/>
        <dbReference type="ChEBI" id="CHEBI:18408"/>
        <dbReference type="ChEBI" id="CHEBI:58115"/>
        <dbReference type="ChEBI" id="CHEBI:60487"/>
        <dbReference type="EC" id="2.7.8.26"/>
    </reaction>
</comment>
<comment type="catalytic activity">
    <reaction evidence="1">
        <text>alpha-ribazole 5'-phosphate + adenosylcob(III)inamide-GDP = adenosylcob(III)alamin 5'-phosphate + GMP + H(+)</text>
        <dbReference type="Rhea" id="RHEA:23560"/>
        <dbReference type="ChEBI" id="CHEBI:15378"/>
        <dbReference type="ChEBI" id="CHEBI:57918"/>
        <dbReference type="ChEBI" id="CHEBI:58115"/>
        <dbReference type="ChEBI" id="CHEBI:60487"/>
        <dbReference type="ChEBI" id="CHEBI:60493"/>
        <dbReference type="EC" id="2.7.8.26"/>
    </reaction>
</comment>
<comment type="cofactor">
    <cofactor evidence="1">
        <name>Mg(2+)</name>
        <dbReference type="ChEBI" id="CHEBI:18420"/>
    </cofactor>
</comment>
<comment type="pathway">
    <text evidence="1">Cofactor biosynthesis; adenosylcobalamin biosynthesis; adenosylcobalamin from cob(II)yrinate a,c-diamide: step 7/7.</text>
</comment>
<comment type="subcellular location">
    <subcellularLocation>
        <location evidence="1">Cell membrane</location>
        <topology evidence="1">Multi-pass membrane protein</topology>
    </subcellularLocation>
</comment>
<comment type="similarity">
    <text evidence="1">Belongs to the CobS family.</text>
</comment>
<organism>
    <name type="scientific">Carboxydothermus hydrogenoformans (strain ATCC BAA-161 / DSM 6008 / Z-2901)</name>
    <dbReference type="NCBI Taxonomy" id="246194"/>
    <lineage>
        <taxon>Bacteria</taxon>
        <taxon>Bacillati</taxon>
        <taxon>Bacillota</taxon>
        <taxon>Clostridia</taxon>
        <taxon>Thermoanaerobacterales</taxon>
        <taxon>Thermoanaerobacteraceae</taxon>
        <taxon>Carboxydothermus</taxon>
    </lineage>
</organism>
<dbReference type="EC" id="2.7.8.26" evidence="1"/>
<dbReference type="EMBL" id="CP000141">
    <property type="protein sequence ID" value="ABB15612.1"/>
    <property type="molecule type" value="Genomic_DNA"/>
</dbReference>
<dbReference type="RefSeq" id="WP_011343709.1">
    <property type="nucleotide sequence ID" value="NC_007503.1"/>
</dbReference>
<dbReference type="STRING" id="246194.CHY_0779"/>
<dbReference type="KEGG" id="chy:CHY_0779"/>
<dbReference type="eggNOG" id="COG0368">
    <property type="taxonomic scope" value="Bacteria"/>
</dbReference>
<dbReference type="HOGENOM" id="CLU_057426_1_1_9"/>
<dbReference type="InParanoid" id="Q3AE01"/>
<dbReference type="OrthoDB" id="9794626at2"/>
<dbReference type="UniPathway" id="UPA00148">
    <property type="reaction ID" value="UER00238"/>
</dbReference>
<dbReference type="Proteomes" id="UP000002706">
    <property type="component" value="Chromosome"/>
</dbReference>
<dbReference type="GO" id="GO:0005886">
    <property type="term" value="C:plasma membrane"/>
    <property type="evidence" value="ECO:0007669"/>
    <property type="project" value="UniProtKB-SubCell"/>
</dbReference>
<dbReference type="GO" id="GO:0051073">
    <property type="term" value="F:adenosylcobinamide-GDP ribazoletransferase activity"/>
    <property type="evidence" value="ECO:0007669"/>
    <property type="project" value="UniProtKB-UniRule"/>
</dbReference>
<dbReference type="GO" id="GO:0008818">
    <property type="term" value="F:cobalamin 5'-phosphate synthase activity"/>
    <property type="evidence" value="ECO:0007669"/>
    <property type="project" value="UniProtKB-UniRule"/>
</dbReference>
<dbReference type="GO" id="GO:0009236">
    <property type="term" value="P:cobalamin biosynthetic process"/>
    <property type="evidence" value="ECO:0007669"/>
    <property type="project" value="UniProtKB-UniRule"/>
</dbReference>
<dbReference type="HAMAP" id="MF_00719">
    <property type="entry name" value="CobS"/>
    <property type="match status" value="1"/>
</dbReference>
<dbReference type="InterPro" id="IPR003805">
    <property type="entry name" value="CobS"/>
</dbReference>
<dbReference type="PANTHER" id="PTHR34148">
    <property type="entry name" value="ADENOSYLCOBINAMIDE-GDP RIBAZOLETRANSFERASE"/>
    <property type="match status" value="1"/>
</dbReference>
<dbReference type="PANTHER" id="PTHR34148:SF1">
    <property type="entry name" value="ADENOSYLCOBINAMIDE-GDP RIBAZOLETRANSFERASE"/>
    <property type="match status" value="1"/>
</dbReference>
<dbReference type="Pfam" id="PF02654">
    <property type="entry name" value="CobS"/>
    <property type="match status" value="1"/>
</dbReference>
<gene>
    <name evidence="1" type="primary">cobS</name>
    <name type="ordered locus">CHY_0779</name>
</gene>
<sequence length="255" mass="27809">MLTTFLLGLTFFTRIPVPGKLNFSEEKFNRAPIFLPAYGLVTGGILALIIELFGRSFPGFFWAGVIIAGQIYLSGALHIDGLLDSLDAIYSNRDREKRLEILKDSRVGSMAVAFFGAFLILKYGSYASFTPKVQAFTVLISEIILRGTGYLVIYSFPYVGSSLGRGFKDNASTAGLIFTLGQTLIFTLGAAAFFNFSLIKILIILLLAYLFAFVVAARWQQFFGGLTGDNYGGIMELTGLFVPVAVLLINNIGVV</sequence>
<name>COBS_CARHZ</name>
<protein>
    <recommendedName>
        <fullName evidence="1">Adenosylcobinamide-GDP ribazoletransferase</fullName>
        <ecNumber evidence="1">2.7.8.26</ecNumber>
    </recommendedName>
    <alternativeName>
        <fullName evidence="1">Cobalamin synthase</fullName>
    </alternativeName>
    <alternativeName>
        <fullName evidence="1">Cobalamin-5'-phosphate synthase</fullName>
    </alternativeName>
</protein>
<keyword id="KW-1003">Cell membrane</keyword>
<keyword id="KW-0169">Cobalamin biosynthesis</keyword>
<keyword id="KW-0460">Magnesium</keyword>
<keyword id="KW-0472">Membrane</keyword>
<keyword id="KW-1185">Reference proteome</keyword>
<keyword id="KW-0808">Transferase</keyword>
<keyword id="KW-0812">Transmembrane</keyword>
<keyword id="KW-1133">Transmembrane helix</keyword>